<comment type="function">
    <text evidence="1">Ligates lysine onto the cytidine present at position 34 of the AUA codon-specific tRNA(Ile) that contains the anticodon CAU, in an ATP-dependent manner. Cytidine is converted to lysidine, thus changing the amino acid specificity of the tRNA from methionine to isoleucine.</text>
</comment>
<comment type="catalytic activity">
    <reaction evidence="1">
        <text>cytidine(34) in tRNA(Ile2) + L-lysine + ATP = lysidine(34) in tRNA(Ile2) + AMP + diphosphate + H(+)</text>
        <dbReference type="Rhea" id="RHEA:43744"/>
        <dbReference type="Rhea" id="RHEA-COMP:10625"/>
        <dbReference type="Rhea" id="RHEA-COMP:10670"/>
        <dbReference type="ChEBI" id="CHEBI:15378"/>
        <dbReference type="ChEBI" id="CHEBI:30616"/>
        <dbReference type="ChEBI" id="CHEBI:32551"/>
        <dbReference type="ChEBI" id="CHEBI:33019"/>
        <dbReference type="ChEBI" id="CHEBI:82748"/>
        <dbReference type="ChEBI" id="CHEBI:83665"/>
        <dbReference type="ChEBI" id="CHEBI:456215"/>
        <dbReference type="EC" id="6.3.4.19"/>
    </reaction>
</comment>
<comment type="subcellular location">
    <subcellularLocation>
        <location evidence="1">Cytoplasm</location>
    </subcellularLocation>
</comment>
<comment type="domain">
    <text>The N-terminal region contains the highly conserved SGGXDS motif, predicted to be a P-loop motif involved in ATP binding.</text>
</comment>
<comment type="similarity">
    <text evidence="1">Belongs to the tRNA(Ile)-lysidine synthase family.</text>
</comment>
<gene>
    <name evidence="1" type="primary">tilS</name>
    <name type="ordered locus">BT_2359</name>
</gene>
<sequence length="495" mass="56499">MCVRLARNLFKTSDFIPCRRVILAVSGGSDSLALMFLVKEYLETLLIPPEIIAVTVDHQLRKESAREAEIVAEICRDHHIKHITVRWEGKKPKTHLAFSARIARYDLLVQEAQKQGASLIMTGHTLNDQVETYQMRCQRLQKRRGALRDEVGAMCDGGAASGFAGALRDKAGARRDEDYVRETRKNIAEKSYGVLYERGLSCIPREALLHRKVRLIRPLLGVQRQTLRNYLRLQGKTWIDDPTNEDRNFERVRVRQSLSSQKLVNIAQKINKAAWQRRQQAQNIADLILALDITVQYGRCFIVKPAPFLQKHSCFPFVVGLFAVLMGGGFYLLSNQKLSMLVQKLCLNSPEKRRFTCAGCVIEYNKEGIALWRERRNMKEALVEPDETLLWDGRYRITNHGSEAIKVGVANLEQLKSLLQNSNSNLEKPHFPSLQSLLMLSNDKGCDIPELISQAIIHKNVIIKRIMAPFDWLSSREDAALVNVVEPFFNLEVKR</sequence>
<reference key="1">
    <citation type="journal article" date="2007" name="Nat. Genet.">
        <title>Genomic analysis of Bartonella identifies type IV secretion systems as host adaptability factors.</title>
        <authorList>
            <person name="Saenz H.L."/>
            <person name="Engel P."/>
            <person name="Stoeckli M.C."/>
            <person name="Lanz C."/>
            <person name="Raddatz G."/>
            <person name="Vayssier-Taussat M."/>
            <person name="Birtles R."/>
            <person name="Schuster S.C."/>
            <person name="Dehio C."/>
        </authorList>
    </citation>
    <scope>NUCLEOTIDE SEQUENCE [LARGE SCALE GENOMIC DNA]</scope>
    <source>
        <strain>CIP 105476 / IBS 506</strain>
    </source>
</reference>
<keyword id="KW-0067">ATP-binding</keyword>
<keyword id="KW-0963">Cytoplasm</keyword>
<keyword id="KW-0436">Ligase</keyword>
<keyword id="KW-0547">Nucleotide-binding</keyword>
<keyword id="KW-0819">tRNA processing</keyword>
<accession>A9IYI2</accession>
<dbReference type="EC" id="6.3.4.19" evidence="1"/>
<dbReference type="EMBL" id="AM260525">
    <property type="protein sequence ID" value="CAK02367.1"/>
    <property type="molecule type" value="Genomic_DNA"/>
</dbReference>
<dbReference type="RefSeq" id="WP_012232425.1">
    <property type="nucleotide sequence ID" value="NC_010161.1"/>
</dbReference>
<dbReference type="SMR" id="A9IYI2"/>
<dbReference type="KEGG" id="btr:BT_2359"/>
<dbReference type="eggNOG" id="COG0037">
    <property type="taxonomic scope" value="Bacteria"/>
</dbReference>
<dbReference type="HOGENOM" id="CLU_018869_3_3_5"/>
<dbReference type="Proteomes" id="UP000001592">
    <property type="component" value="Chromosome"/>
</dbReference>
<dbReference type="GO" id="GO:0005737">
    <property type="term" value="C:cytoplasm"/>
    <property type="evidence" value="ECO:0007669"/>
    <property type="project" value="UniProtKB-SubCell"/>
</dbReference>
<dbReference type="GO" id="GO:0005524">
    <property type="term" value="F:ATP binding"/>
    <property type="evidence" value="ECO:0007669"/>
    <property type="project" value="UniProtKB-UniRule"/>
</dbReference>
<dbReference type="GO" id="GO:0032267">
    <property type="term" value="F:tRNA(Ile)-lysidine synthase activity"/>
    <property type="evidence" value="ECO:0007669"/>
    <property type="project" value="UniProtKB-EC"/>
</dbReference>
<dbReference type="GO" id="GO:0006400">
    <property type="term" value="P:tRNA modification"/>
    <property type="evidence" value="ECO:0007669"/>
    <property type="project" value="UniProtKB-UniRule"/>
</dbReference>
<dbReference type="CDD" id="cd01992">
    <property type="entry name" value="TilS_N"/>
    <property type="match status" value="1"/>
</dbReference>
<dbReference type="Gene3D" id="3.40.50.620">
    <property type="entry name" value="HUPs"/>
    <property type="match status" value="1"/>
</dbReference>
<dbReference type="HAMAP" id="MF_01161">
    <property type="entry name" value="tRNA_Ile_lys_synt"/>
    <property type="match status" value="1"/>
</dbReference>
<dbReference type="InterPro" id="IPR014729">
    <property type="entry name" value="Rossmann-like_a/b/a_fold"/>
</dbReference>
<dbReference type="InterPro" id="IPR011063">
    <property type="entry name" value="TilS/TtcA_N"/>
</dbReference>
<dbReference type="InterPro" id="IPR012094">
    <property type="entry name" value="tRNA_Ile_lys_synt"/>
</dbReference>
<dbReference type="InterPro" id="IPR012795">
    <property type="entry name" value="tRNA_Ile_lys_synt_N"/>
</dbReference>
<dbReference type="NCBIfam" id="TIGR02432">
    <property type="entry name" value="lysidine_TilS_N"/>
    <property type="match status" value="1"/>
</dbReference>
<dbReference type="PANTHER" id="PTHR43033">
    <property type="entry name" value="TRNA(ILE)-LYSIDINE SYNTHASE-RELATED"/>
    <property type="match status" value="1"/>
</dbReference>
<dbReference type="PANTHER" id="PTHR43033:SF1">
    <property type="entry name" value="TRNA(ILE)-LYSIDINE SYNTHASE-RELATED"/>
    <property type="match status" value="1"/>
</dbReference>
<dbReference type="Pfam" id="PF01171">
    <property type="entry name" value="ATP_bind_3"/>
    <property type="match status" value="2"/>
</dbReference>
<dbReference type="SUPFAM" id="SSF52402">
    <property type="entry name" value="Adenine nucleotide alpha hydrolases-like"/>
    <property type="match status" value="1"/>
</dbReference>
<proteinExistence type="inferred from homology"/>
<organism>
    <name type="scientific">Bartonella tribocorum (strain CIP 105476 / IBS 506)</name>
    <dbReference type="NCBI Taxonomy" id="382640"/>
    <lineage>
        <taxon>Bacteria</taxon>
        <taxon>Pseudomonadati</taxon>
        <taxon>Pseudomonadota</taxon>
        <taxon>Alphaproteobacteria</taxon>
        <taxon>Hyphomicrobiales</taxon>
        <taxon>Bartonellaceae</taxon>
        <taxon>Bartonella</taxon>
    </lineage>
</organism>
<feature type="chain" id="PRO_1000085361" description="tRNA(Ile)-lysidine synthase">
    <location>
        <begin position="1"/>
        <end position="495"/>
    </location>
</feature>
<feature type="binding site" evidence="1">
    <location>
        <begin position="26"/>
        <end position="31"/>
    </location>
    <ligand>
        <name>ATP</name>
        <dbReference type="ChEBI" id="CHEBI:30616"/>
    </ligand>
</feature>
<evidence type="ECO:0000255" key="1">
    <source>
        <dbReference type="HAMAP-Rule" id="MF_01161"/>
    </source>
</evidence>
<name>TILS_BART1</name>
<protein>
    <recommendedName>
        <fullName evidence="1">tRNA(Ile)-lysidine synthase</fullName>
        <ecNumber evidence="1">6.3.4.19</ecNumber>
    </recommendedName>
    <alternativeName>
        <fullName evidence="1">tRNA(Ile)-2-lysyl-cytidine synthase</fullName>
    </alternativeName>
    <alternativeName>
        <fullName evidence="1">tRNA(Ile)-lysidine synthetase</fullName>
    </alternativeName>
</protein>